<evidence type="ECO:0000250" key="1">
    <source>
        <dbReference type="UniProtKB" id="Q6V4S5"/>
    </source>
</evidence>
<evidence type="ECO:0000255" key="2"/>
<evidence type="ECO:0000255" key="3">
    <source>
        <dbReference type="PROSITE-ProRule" id="PRU00114"/>
    </source>
</evidence>
<evidence type="ECO:0000255" key="4">
    <source>
        <dbReference type="PROSITE-ProRule" id="PRU00316"/>
    </source>
</evidence>
<evidence type="ECO:0000256" key="5">
    <source>
        <dbReference type="SAM" id="MobiDB-lite"/>
    </source>
</evidence>
<evidence type="ECO:0000269" key="6">
    <source>
    </source>
</evidence>
<evidence type="ECO:0000269" key="7">
    <source>
    </source>
</evidence>
<evidence type="ECO:0000303" key="8">
    <source>
    </source>
</evidence>
<evidence type="ECO:0000305" key="9"/>
<sequence>MVGRKVDREIIARRNSRRDGMMMKLNFCFFFCRRWWAFLLLQLHMLQALAQDDVAPYFKTEPGLPQIHLEGNRLVLTCLAEGSWPLEFKWLHNDSEITTYSSEYKYIIPALQRSDAGFYQCIVRNRMGALLQRRSEVQVAYMGNFMDANQKKTVTEGEAAVLNFMHIFSYPRPQVTWFRDGHKIIPSSRIAITLENQLVILATSVADAGGYYAQAVNEKNGENKTSPLIHLSIASATDPSDPTAPIIVIPPQNKSVVVGTSEVTLECVASARPVERLSIMWKRNGIKITSGISSFGRRLTITNPTSADVGMYFCEAKLRDSTEEPARAKAFISLMVPPYFTAEPEGVILAEVEKDVDILCQAMGVPIPSLVWYKDSVPLSKLQNPRYKVLLSGGLRIHALRPQDAGIFQCFASNKAGEIQTYTYLDVTNIKPAFIQPPEDTTVTEGMTAMLTCEVSGAPKPAISWKKGNQILASGSVQIPRFVLLESGGLQITPVFLQDAGNYTCHAVNSEGALNAFVMLTVWNRTFIVHPPENSTVIKGTTATLRCEATHDPRISIRYVWKKDSVVINPSSSSRITVEKDGTLLISQTWSGDIGDYTCEVISFGGNDSRMARLEVIELPHSPQNLLATLNSSYSRSVVLSWVRPFDGNSPVLYYMVELSENNSPWKVHLSNLDPKMTSVTVSGLTPARTYQFRVCAVNQVGKGQYSSETSRLMLPEEPPSAPPKNIVASGRTNQSIMVQWQPPPESEHNGVLHGYILRYRLAGLPGEYQYKNITSAEINYCLVTDLIIWTQYEIQVASYNGAGLGAFSRPVTEYTLQGVPTAPPQNVQVEAVNSTTIQFLWSPPPQQFINGINQGYKLLAWPVDAPGSVTVVTIAPDFHGVHSGCITNLKKYTTYYTSVLCFTTPGDGPRSAPQLLRTLEDKPGAVGHLSFTEILDTSLKVSWQEPVEKNGIITGYQLSWEVYGRNESRLTRTLTNTTLEYKITGLSSLTTYTIEVAAVTAKGSGWVTSSTISSGVPPELPGAPSNLVISNISPRSATLQFRPGYDGKTSICKWIVEGQVGVLGEEEEWVSLHEVDNEPDAQMLEVPNLTPYTHYRFRMRQVNVVGASPLSQPSRVIQTLQAPPDVAPGSVSVRTASESSLRMRWVPLPDTQYNGNPESVGYRIKFWRVDLQPSALLKVISDRLERECTIQDLEEWTEYELQIQAFNAIGAGPWNEVVGVRTRESVPSAPPENVSAEAVSSTQILLTWSAVPESEQNGLILGYKILYKAKDLDSEPRSQTVRGNHTQSCLLSGLRKYVLYEIRVLAFTRIGDGVPSSPVLTERTKDDAPGPPIRLVFPEVRLTSVRIVWQPPEEPNGIILGYQIAYRLASSSPNKFTTVEVGSTVRQFTATDLTPESAYIFRTSAKTRQGWGEPLEATVITTEKRERPAPPQQLTTPQSDVSSRSLQLHWVPGSDGSSPIRYFTVQVRELPNGDWQTYSSSISHEATSCIIESLNPFTSYKLRVKATNDIGDSDYSAETEAVTTLQDVPDEPPSSVLVTPHTTSSVLVQWQPPKAESLNGLLLGYRIYYRELDYDAGSATESKAVKNPSALRAELTPQSSFKTVNSSSALTTYELTQLKKYKRYEVLMTAYNVIGESPTSTPVEVFVGEAAPAMAPQNIQVNSLSASQLELTWDPPPADSQNGNIQGYKIYYWEGDVQNDTEKVKVFSSLRQLSASKNLTSHTRYLVCISAFNAAGDGPRSRPSAGRTHQAAPSAPSFLVFSEITSTTLNVSWGEPTAANGVLQGYRVVYEPLAPVQGVSKVVTVDIKGNWQRWLKVRDLTKGMTYLFRVQARTIAYGPELQANVTAGPAEGSPGSPHEILVTKSASGLTVQWTEGDSGEKPTTGYIIEARPSDEGLWDMFVKDIPRSATSYTVSLDKLKQGVTYEFRVVAVNEFGYGEPSVPSVAVSAQTEAPFYEEWWFLLVMALSSLILILLVVFALVLHGQSKKYKNCSTGKTISNVEESVTLDNGGFTALELNSRHLNIKSTFSKKNGTRSPPRPSPGGLHYSDEDICNKYNGAVLTEGLGLNEKPLEMSESEATDSDYEDELPKHSFVNHYMSDPTYYNSWKRQQKGVKHPTSYRYEECSASETEPYFQTVITTQSSGGVYTPTGQPAPGSRTPVTGFSSFV</sequence>
<organism>
    <name type="scientific">Gallus gallus</name>
    <name type="common">Chicken</name>
    <dbReference type="NCBI Taxonomy" id="9031"/>
    <lineage>
        <taxon>Eukaryota</taxon>
        <taxon>Metazoa</taxon>
        <taxon>Chordata</taxon>
        <taxon>Craniata</taxon>
        <taxon>Vertebrata</taxon>
        <taxon>Euteleostomi</taxon>
        <taxon>Archelosauria</taxon>
        <taxon>Archosauria</taxon>
        <taxon>Dinosauria</taxon>
        <taxon>Saurischia</taxon>
        <taxon>Theropoda</taxon>
        <taxon>Coelurosauria</taxon>
        <taxon>Aves</taxon>
        <taxon>Neognathae</taxon>
        <taxon>Galloanserae</taxon>
        <taxon>Galliformes</taxon>
        <taxon>Phasianidae</taxon>
        <taxon>Phasianinae</taxon>
        <taxon>Gallus</taxon>
    </lineage>
</organism>
<gene>
    <name evidence="8" type="primary">SDK1</name>
</gene>
<feature type="signal peptide" evidence="2">
    <location>
        <begin position="1"/>
        <end position="50"/>
    </location>
</feature>
<feature type="chain" id="PRO_0000226977" description="Protein sidekick-1">
    <location>
        <begin position="51"/>
        <end position="2169"/>
    </location>
</feature>
<feature type="topological domain" description="Extracellular" evidence="2">
    <location>
        <begin position="51"/>
        <end position="1961"/>
    </location>
</feature>
<feature type="transmembrane region" description="Helical" evidence="2">
    <location>
        <begin position="1962"/>
        <end position="1982"/>
    </location>
</feature>
<feature type="topological domain" description="Cytoplasmic" evidence="2">
    <location>
        <begin position="1983"/>
        <end position="2169"/>
    </location>
</feature>
<feature type="domain" description="Ig-like C2-type 1">
    <location>
        <begin position="56"/>
        <end position="138"/>
    </location>
</feature>
<feature type="domain" description="Ig-like C2-type 2">
    <location>
        <begin position="143"/>
        <end position="229"/>
    </location>
</feature>
<feature type="domain" description="Ig-like C2-type 3">
    <location>
        <begin position="245"/>
        <end position="333"/>
    </location>
</feature>
<feature type="domain" description="Ig-like C2-type 4">
    <location>
        <begin position="338"/>
        <end position="428"/>
    </location>
</feature>
<feature type="domain" description="Ig-like C2-type 5">
    <location>
        <begin position="432"/>
        <end position="521"/>
    </location>
</feature>
<feature type="domain" description="Ig-like C2-type 6">
    <location>
        <begin position="525"/>
        <end position="615"/>
    </location>
</feature>
<feature type="domain" description="Fibronectin type-III 1" evidence="4">
    <location>
        <begin position="622"/>
        <end position="718"/>
    </location>
</feature>
<feature type="domain" description="Fibronectin type-III 2" evidence="4">
    <location>
        <begin position="723"/>
        <end position="819"/>
    </location>
</feature>
<feature type="domain" description="Fibronectin type-III 3" evidence="4">
    <location>
        <begin position="824"/>
        <end position="922"/>
    </location>
</feature>
<feature type="domain" description="Fibronectin type-III 4" evidence="4">
    <location>
        <begin position="926"/>
        <end position="1020"/>
    </location>
</feature>
<feature type="domain" description="Fibronectin type-III 5" evidence="4">
    <location>
        <begin position="1024"/>
        <end position="1123"/>
    </location>
</feature>
<feature type="domain" description="Fibronectin type-III 6" evidence="4">
    <location>
        <begin position="1128"/>
        <end position="1226"/>
    </location>
</feature>
<feature type="domain" description="Fibronectin type-III 7" evidence="4">
    <location>
        <begin position="1231"/>
        <end position="1328"/>
    </location>
</feature>
<feature type="domain" description="Fibronectin type-III 8" evidence="4">
    <location>
        <begin position="1332"/>
        <end position="1426"/>
    </location>
</feature>
<feature type="domain" description="Fibronectin type-III 9" evidence="4">
    <location>
        <begin position="1431"/>
        <end position="1528"/>
    </location>
</feature>
<feature type="domain" description="Fibronectin type-III 10" evidence="4">
    <location>
        <begin position="1533"/>
        <end position="1651"/>
    </location>
</feature>
<feature type="domain" description="Fibronectin type-III 11" evidence="4">
    <location>
        <begin position="1656"/>
        <end position="1752"/>
    </location>
</feature>
<feature type="domain" description="Fibronectin type-III 12" evidence="4">
    <location>
        <begin position="1756"/>
        <end position="1851"/>
    </location>
</feature>
<feature type="domain" description="Fibronectin type-III 13" evidence="4">
    <location>
        <begin position="1854"/>
        <end position="1955"/>
    </location>
</feature>
<feature type="region of interest" description="Disordered" evidence="5">
    <location>
        <begin position="1423"/>
        <end position="1443"/>
    </location>
</feature>
<feature type="region of interest" description="Disordered" evidence="5">
    <location>
        <begin position="2028"/>
        <end position="2050"/>
    </location>
</feature>
<feature type="region of interest" description="Disordered" evidence="5">
    <location>
        <begin position="2145"/>
        <end position="2169"/>
    </location>
</feature>
<feature type="short sequence motif" description="PDZ-binding" evidence="1">
    <location>
        <begin position="2163"/>
        <end position="2169"/>
    </location>
</feature>
<feature type="compositionally biased region" description="Polar residues" evidence="5">
    <location>
        <begin position="1433"/>
        <end position="1443"/>
    </location>
</feature>
<feature type="compositionally biased region" description="Polar residues" evidence="5">
    <location>
        <begin position="2160"/>
        <end position="2169"/>
    </location>
</feature>
<feature type="glycosylation site" description="N-linked (GlcNAc...) asparagine" evidence="2">
    <location>
        <position position="93"/>
    </location>
</feature>
<feature type="glycosylation site" description="N-linked (GlcNAc...) asparagine" evidence="2">
    <location>
        <position position="223"/>
    </location>
</feature>
<feature type="glycosylation site" description="N-linked (GlcNAc...) asparagine" evidence="2">
    <location>
        <position position="253"/>
    </location>
</feature>
<feature type="glycosylation site" description="N-linked (GlcNAc...) asparagine" evidence="2">
    <location>
        <position position="502"/>
    </location>
</feature>
<feature type="glycosylation site" description="N-linked (GlcNAc...) asparagine" evidence="2">
    <location>
        <position position="524"/>
    </location>
</feature>
<feature type="glycosylation site" description="N-linked (GlcNAc...) asparagine" evidence="2">
    <location>
        <position position="534"/>
    </location>
</feature>
<feature type="glycosylation site" description="N-linked (GlcNAc...) asparagine" evidence="2">
    <location>
        <position position="607"/>
    </location>
</feature>
<feature type="glycosylation site" description="N-linked (GlcNAc...) asparagine" evidence="2">
    <location>
        <position position="631"/>
    </location>
</feature>
<feature type="glycosylation site" description="N-linked (GlcNAc...) asparagine" evidence="2">
    <location>
        <position position="734"/>
    </location>
</feature>
<feature type="glycosylation site" description="N-linked (GlcNAc...) asparagine" evidence="2">
    <location>
        <position position="773"/>
    </location>
</feature>
<feature type="glycosylation site" description="N-linked (GlcNAc...) asparagine" evidence="2">
    <location>
        <position position="834"/>
    </location>
</feature>
<feature type="glycosylation site" description="N-linked (GlcNAc...) asparagine" evidence="2">
    <location>
        <position position="967"/>
    </location>
</feature>
<feature type="glycosylation site" description="N-linked (GlcNAc...) asparagine" evidence="2">
    <location>
        <position position="977"/>
    </location>
</feature>
<feature type="glycosylation site" description="N-linked (GlcNAc...) asparagine" evidence="2">
    <location>
        <position position="1234"/>
    </location>
</feature>
<feature type="glycosylation site" description="N-linked (GlcNAc...) asparagine" evidence="2">
    <location>
        <position position="1285"/>
    </location>
</feature>
<feature type="glycosylation site" description="N-linked (GlcNAc...) asparagine" evidence="2">
    <location>
        <position position="1606"/>
    </location>
</feature>
<feature type="glycosylation site" description="N-linked (GlcNAc...) asparagine" evidence="2">
    <location>
        <position position="1700"/>
    </location>
</feature>
<feature type="glycosylation site" description="N-linked (GlcNAc...) asparagine" evidence="2">
    <location>
        <position position="1719"/>
    </location>
</feature>
<feature type="glycosylation site" description="N-linked (GlcNAc...) asparagine" evidence="2">
    <location>
        <position position="1771"/>
    </location>
</feature>
<feature type="glycosylation site" description="N-linked (GlcNAc...) asparagine" evidence="2">
    <location>
        <position position="1845"/>
    </location>
</feature>
<feature type="disulfide bond" evidence="3">
    <location>
        <begin position="78"/>
        <end position="121"/>
    </location>
</feature>
<feature type="disulfide bond" evidence="3">
    <location>
        <begin position="267"/>
        <end position="314"/>
    </location>
</feature>
<feature type="disulfide bond" evidence="3">
    <location>
        <begin position="360"/>
        <end position="410"/>
    </location>
</feature>
<feature type="disulfide bond" evidence="3">
    <location>
        <begin position="453"/>
        <end position="505"/>
    </location>
</feature>
<feature type="disulfide bond" evidence="3">
    <location>
        <begin position="547"/>
        <end position="599"/>
    </location>
</feature>
<comment type="function">
    <text evidence="6 7">Adhesion molecule that promotes lamina-specific synaptic connections in the retina (PubMed:12230981, PubMed:18216854). Expressed in specific subsets of interneurons and retinal ganglion cells (RGCs) and promotes synaptic connectivity via homophilic interactions (PubMed:12230981, PubMed:18216854).</text>
</comment>
<comment type="subunit">
    <text evidence="6">Homodimer; mediates homophilic interactions to promote cell adhesion.</text>
</comment>
<comment type="subcellular location">
    <subcellularLocation>
        <location evidence="9">Cell membrane</location>
        <topology evidence="9">Single-pass type I membrane protein</topology>
    </subcellularLocation>
    <subcellularLocation>
        <location evidence="6">Synapse</location>
    </subcellularLocation>
</comment>
<comment type="tissue specificity">
    <text evidence="6 7">Expressed by non-overlapping subsets of retinal neurons (PubMed:12230981). SDK1, SDK2, DSCAM and DSCAML1 are expressed in non-overlapping subsets of interneurons and retinal ganglion cells (RGCs) that form synapses in distinct inner plexiform layer (IPL) sublaminae (PubMed:18216854).</text>
</comment>
<comment type="similarity">
    <text evidence="9">Belongs to the sidekick family.</text>
</comment>
<name>SDK1_CHICK</name>
<keyword id="KW-0130">Cell adhesion</keyword>
<keyword id="KW-1003">Cell membrane</keyword>
<keyword id="KW-1015">Disulfide bond</keyword>
<keyword id="KW-0325">Glycoprotein</keyword>
<keyword id="KW-0393">Immunoglobulin domain</keyword>
<keyword id="KW-0472">Membrane</keyword>
<keyword id="KW-1185">Reference proteome</keyword>
<keyword id="KW-0677">Repeat</keyword>
<keyword id="KW-0732">Signal</keyword>
<keyword id="KW-0770">Synapse</keyword>
<keyword id="KW-0812">Transmembrane</keyword>
<keyword id="KW-1133">Transmembrane helix</keyword>
<dbReference type="EMBL" id="AF537107">
    <property type="protein sequence ID" value="AAN15075.1"/>
    <property type="molecule type" value="mRNA"/>
</dbReference>
<dbReference type="SMR" id="Q8AV58"/>
<dbReference type="FunCoup" id="Q8AV58">
    <property type="interactions" value="599"/>
</dbReference>
<dbReference type="STRING" id="9031.ENSGALP00000060681"/>
<dbReference type="GlyCosmos" id="Q8AV58">
    <property type="glycosylation" value="20 sites, No reported glycans"/>
</dbReference>
<dbReference type="GlyGen" id="Q8AV58">
    <property type="glycosylation" value="20 sites"/>
</dbReference>
<dbReference type="PaxDb" id="9031-ENSGALP00000007030"/>
<dbReference type="VEuPathDB" id="HostDB:geneid_373894"/>
<dbReference type="eggNOG" id="KOG3510">
    <property type="taxonomic scope" value="Eukaryota"/>
</dbReference>
<dbReference type="InParanoid" id="Q8AV58"/>
<dbReference type="OrthoDB" id="8923679at2759"/>
<dbReference type="PhylomeDB" id="Q8AV58"/>
<dbReference type="Proteomes" id="UP000000539">
    <property type="component" value="Unassembled WGS sequence"/>
</dbReference>
<dbReference type="GO" id="GO:0005886">
    <property type="term" value="C:plasma membrane"/>
    <property type="evidence" value="ECO:0007669"/>
    <property type="project" value="UniProtKB-SubCell"/>
</dbReference>
<dbReference type="GO" id="GO:0045202">
    <property type="term" value="C:synapse"/>
    <property type="evidence" value="ECO:0000314"/>
    <property type="project" value="UniProtKB"/>
</dbReference>
<dbReference type="GO" id="GO:0042802">
    <property type="term" value="F:identical protein binding"/>
    <property type="evidence" value="ECO:0000314"/>
    <property type="project" value="UniProtKB"/>
</dbReference>
<dbReference type="GO" id="GO:0007156">
    <property type="term" value="P:homophilic cell adhesion via plasma membrane adhesion molecules"/>
    <property type="evidence" value="ECO:0000314"/>
    <property type="project" value="UniProtKB"/>
</dbReference>
<dbReference type="GO" id="GO:0010842">
    <property type="term" value="P:retina layer formation"/>
    <property type="evidence" value="ECO:0000314"/>
    <property type="project" value="UniProtKB"/>
</dbReference>
<dbReference type="GO" id="GO:0007416">
    <property type="term" value="P:synapse assembly"/>
    <property type="evidence" value="ECO:0000314"/>
    <property type="project" value="UniProtKB"/>
</dbReference>
<dbReference type="CDD" id="cd00063">
    <property type="entry name" value="FN3"/>
    <property type="match status" value="13"/>
</dbReference>
<dbReference type="FunFam" id="2.60.40.10:FF:000202">
    <property type="entry name" value="Sidekick cell adhesion molecule 1"/>
    <property type="match status" value="1"/>
</dbReference>
<dbReference type="FunFam" id="2.60.40.10:FF:000253">
    <property type="entry name" value="Sidekick cell adhesion molecule 1"/>
    <property type="match status" value="1"/>
</dbReference>
<dbReference type="FunFam" id="2.60.40.10:FF:000158">
    <property type="entry name" value="Sidekick cell adhesion molecule 2"/>
    <property type="match status" value="1"/>
</dbReference>
<dbReference type="FunFam" id="2.60.40.10:FF:000177">
    <property type="entry name" value="Sidekick cell adhesion molecule 2"/>
    <property type="match status" value="1"/>
</dbReference>
<dbReference type="FunFam" id="2.60.40.10:FF:000206">
    <property type="entry name" value="Sidekick cell adhesion molecule 2"/>
    <property type="match status" value="1"/>
</dbReference>
<dbReference type="FunFam" id="2.60.40.10:FF:000209">
    <property type="entry name" value="Sidekick cell adhesion molecule 2"/>
    <property type="match status" value="1"/>
</dbReference>
<dbReference type="FunFam" id="2.60.40.10:FF:000231">
    <property type="entry name" value="Sidekick cell adhesion molecule 2"/>
    <property type="match status" value="1"/>
</dbReference>
<dbReference type="FunFam" id="2.60.40.10:FF:000236">
    <property type="entry name" value="Sidekick cell adhesion molecule 2"/>
    <property type="match status" value="1"/>
</dbReference>
<dbReference type="FunFam" id="2.60.40.10:FF:000237">
    <property type="entry name" value="Sidekick cell adhesion molecule 2"/>
    <property type="match status" value="1"/>
</dbReference>
<dbReference type="FunFam" id="2.60.40.10:FF:000261">
    <property type="entry name" value="Sidekick cell adhesion molecule 2"/>
    <property type="match status" value="1"/>
</dbReference>
<dbReference type="FunFam" id="2.60.40.10:FF:000266">
    <property type="entry name" value="Sidekick cell adhesion molecule 2"/>
    <property type="match status" value="1"/>
</dbReference>
<dbReference type="FunFam" id="2.60.40.10:FF:000267">
    <property type="entry name" value="Sidekick cell adhesion molecule 2"/>
    <property type="match status" value="1"/>
</dbReference>
<dbReference type="FunFam" id="2.60.40.10:FF:000271">
    <property type="entry name" value="Sidekick cell adhesion molecule 2"/>
    <property type="match status" value="1"/>
</dbReference>
<dbReference type="FunFam" id="2.60.40.10:FF:000301">
    <property type="entry name" value="Sidekick cell adhesion molecule 2"/>
    <property type="match status" value="1"/>
</dbReference>
<dbReference type="FunFam" id="2.60.40.10:FF:000359">
    <property type="entry name" value="Sidekick cell adhesion molecule 2"/>
    <property type="match status" value="1"/>
</dbReference>
<dbReference type="FunFam" id="2.60.40.10:FF:000360">
    <property type="entry name" value="Sidekick cell adhesion molecule 2"/>
    <property type="match status" value="1"/>
</dbReference>
<dbReference type="FunFam" id="2.60.40.10:FF:000420">
    <property type="entry name" value="Sidekick cell adhesion molecule 2"/>
    <property type="match status" value="1"/>
</dbReference>
<dbReference type="FunFam" id="2.60.40.10:FF:000434">
    <property type="entry name" value="Sidekick cell adhesion molecule 2"/>
    <property type="match status" value="1"/>
</dbReference>
<dbReference type="FunFam" id="2.60.40.10:FF:000485">
    <property type="entry name" value="Sidekick cell adhesion molecule 2"/>
    <property type="match status" value="1"/>
</dbReference>
<dbReference type="Gene3D" id="2.60.40.10">
    <property type="entry name" value="Immunoglobulins"/>
    <property type="match status" value="19"/>
</dbReference>
<dbReference type="InterPro" id="IPR003961">
    <property type="entry name" value="FN3_dom"/>
</dbReference>
<dbReference type="InterPro" id="IPR036116">
    <property type="entry name" value="FN3_sf"/>
</dbReference>
<dbReference type="InterPro" id="IPR007110">
    <property type="entry name" value="Ig-like_dom"/>
</dbReference>
<dbReference type="InterPro" id="IPR036179">
    <property type="entry name" value="Ig-like_dom_sf"/>
</dbReference>
<dbReference type="InterPro" id="IPR013783">
    <property type="entry name" value="Ig-like_fold"/>
</dbReference>
<dbReference type="InterPro" id="IPR013098">
    <property type="entry name" value="Ig_I-set"/>
</dbReference>
<dbReference type="InterPro" id="IPR003599">
    <property type="entry name" value="Ig_sub"/>
</dbReference>
<dbReference type="InterPro" id="IPR003598">
    <property type="entry name" value="Ig_sub2"/>
</dbReference>
<dbReference type="InterPro" id="IPR050964">
    <property type="entry name" value="Striated_Muscle_Regulatory"/>
</dbReference>
<dbReference type="PANTHER" id="PTHR13817:SF166">
    <property type="entry name" value="NEURONAL IGCAM-RELATED"/>
    <property type="match status" value="1"/>
</dbReference>
<dbReference type="PANTHER" id="PTHR13817">
    <property type="entry name" value="TITIN"/>
    <property type="match status" value="1"/>
</dbReference>
<dbReference type="Pfam" id="PF00041">
    <property type="entry name" value="fn3"/>
    <property type="match status" value="13"/>
</dbReference>
<dbReference type="Pfam" id="PF07679">
    <property type="entry name" value="I-set"/>
    <property type="match status" value="3"/>
</dbReference>
<dbReference type="Pfam" id="PF13927">
    <property type="entry name" value="Ig_3"/>
    <property type="match status" value="3"/>
</dbReference>
<dbReference type="PRINTS" id="PR00014">
    <property type="entry name" value="FNTYPEIII"/>
</dbReference>
<dbReference type="SMART" id="SM00060">
    <property type="entry name" value="FN3"/>
    <property type="match status" value="13"/>
</dbReference>
<dbReference type="SMART" id="SM00409">
    <property type="entry name" value="IG"/>
    <property type="match status" value="7"/>
</dbReference>
<dbReference type="SMART" id="SM00408">
    <property type="entry name" value="IGc2"/>
    <property type="match status" value="6"/>
</dbReference>
<dbReference type="SUPFAM" id="SSF49265">
    <property type="entry name" value="Fibronectin type III"/>
    <property type="match status" value="7"/>
</dbReference>
<dbReference type="SUPFAM" id="SSF48726">
    <property type="entry name" value="Immunoglobulin"/>
    <property type="match status" value="6"/>
</dbReference>
<dbReference type="PROSITE" id="PS50853">
    <property type="entry name" value="FN3"/>
    <property type="match status" value="13"/>
</dbReference>
<dbReference type="PROSITE" id="PS50835">
    <property type="entry name" value="IG_LIKE"/>
    <property type="match status" value="5"/>
</dbReference>
<reference key="1">
    <citation type="journal article" date="2002" name="Cell">
        <title>Sidekicks: synaptic adhesion molecules that promote lamina-specific connectivity in the retina.</title>
        <authorList>
            <person name="Yamagata M."/>
            <person name="Weiner J.A."/>
            <person name="Sanes J.R."/>
        </authorList>
    </citation>
    <scope>NUCLEOTIDE SEQUENCE [MRNA]</scope>
    <scope>FUNCTION</scope>
    <scope>SUBCELLULAR LOCATION</scope>
    <scope>SUBUNIT</scope>
    <scope>TISSUE SPECIFICITY</scope>
    <source>
        <tissue>Retina</tissue>
    </source>
</reference>
<reference key="2">
    <citation type="journal article" date="2008" name="Nature">
        <title>Dscam and Sidekick proteins direct lamina-specific synaptic connections in vertebrate retina.</title>
        <authorList>
            <person name="Yamagata M."/>
            <person name="Sanes J.R."/>
        </authorList>
    </citation>
    <scope>FUNCTION</scope>
    <scope>SUBUNIT</scope>
    <scope>TISSUE SPECIFICITY</scope>
</reference>
<proteinExistence type="evidence at protein level"/>
<accession>Q8AV58</accession>
<protein>
    <recommendedName>
        <fullName evidence="8">Protein sidekick-1</fullName>
    </recommendedName>
</protein>